<reference key="1">
    <citation type="journal article" date="2006" name="J. Bacteriol.">
        <title>Pathogenomic sequence analysis of Bacillus cereus and Bacillus thuringiensis isolates closely related to Bacillus anthracis.</title>
        <authorList>
            <person name="Han C.S."/>
            <person name="Xie G."/>
            <person name="Challacombe J.F."/>
            <person name="Altherr M.R."/>
            <person name="Bhotika S.S."/>
            <person name="Bruce D."/>
            <person name="Campbell C.S."/>
            <person name="Campbell M.L."/>
            <person name="Chen J."/>
            <person name="Chertkov O."/>
            <person name="Cleland C."/>
            <person name="Dimitrijevic M."/>
            <person name="Doggett N.A."/>
            <person name="Fawcett J.J."/>
            <person name="Glavina T."/>
            <person name="Goodwin L.A."/>
            <person name="Hill K.K."/>
            <person name="Hitchcock P."/>
            <person name="Jackson P.J."/>
            <person name="Keim P."/>
            <person name="Kewalramani A.R."/>
            <person name="Longmire J."/>
            <person name="Lucas S."/>
            <person name="Malfatti S."/>
            <person name="McMurry K."/>
            <person name="Meincke L.J."/>
            <person name="Misra M."/>
            <person name="Moseman B.L."/>
            <person name="Mundt M."/>
            <person name="Munk A.C."/>
            <person name="Okinaka R.T."/>
            <person name="Parson-Quintana B."/>
            <person name="Reilly L.P."/>
            <person name="Richardson P."/>
            <person name="Robinson D.L."/>
            <person name="Rubin E."/>
            <person name="Saunders E."/>
            <person name="Tapia R."/>
            <person name="Tesmer J.G."/>
            <person name="Thayer N."/>
            <person name="Thompson L.S."/>
            <person name="Tice H."/>
            <person name="Ticknor L.O."/>
            <person name="Wills P.L."/>
            <person name="Brettin T.S."/>
            <person name="Gilna P."/>
        </authorList>
    </citation>
    <scope>NUCLEOTIDE SEQUENCE [LARGE SCALE GENOMIC DNA]</scope>
    <source>
        <strain>97-27</strain>
    </source>
</reference>
<dbReference type="EC" id="6.3.1.1" evidence="1"/>
<dbReference type="EMBL" id="AE017355">
    <property type="protein sequence ID" value="AAT63306.1"/>
    <property type="molecule type" value="Genomic_DNA"/>
</dbReference>
<dbReference type="RefSeq" id="WP_000284908.1">
    <property type="nucleotide sequence ID" value="NC_005957.1"/>
</dbReference>
<dbReference type="RefSeq" id="YP_035988.1">
    <property type="nucleotide sequence ID" value="NC_005957.1"/>
</dbReference>
<dbReference type="SMR" id="Q6HKD8"/>
<dbReference type="GeneID" id="69532735"/>
<dbReference type="KEGG" id="btk:BT9727_1655"/>
<dbReference type="PATRIC" id="fig|281309.8.peg.1743"/>
<dbReference type="HOGENOM" id="CLU_071543_0_0_9"/>
<dbReference type="UniPathway" id="UPA00134">
    <property type="reaction ID" value="UER00194"/>
</dbReference>
<dbReference type="Proteomes" id="UP000001301">
    <property type="component" value="Chromosome"/>
</dbReference>
<dbReference type="GO" id="GO:0005829">
    <property type="term" value="C:cytosol"/>
    <property type="evidence" value="ECO:0007669"/>
    <property type="project" value="TreeGrafter"/>
</dbReference>
<dbReference type="GO" id="GO:0004071">
    <property type="term" value="F:aspartate-ammonia ligase activity"/>
    <property type="evidence" value="ECO:0007669"/>
    <property type="project" value="UniProtKB-UniRule"/>
</dbReference>
<dbReference type="GO" id="GO:0005524">
    <property type="term" value="F:ATP binding"/>
    <property type="evidence" value="ECO:0007669"/>
    <property type="project" value="UniProtKB-UniRule"/>
</dbReference>
<dbReference type="GO" id="GO:0140096">
    <property type="term" value="F:catalytic activity, acting on a protein"/>
    <property type="evidence" value="ECO:0007669"/>
    <property type="project" value="UniProtKB-ARBA"/>
</dbReference>
<dbReference type="GO" id="GO:0016740">
    <property type="term" value="F:transferase activity"/>
    <property type="evidence" value="ECO:0007669"/>
    <property type="project" value="UniProtKB-ARBA"/>
</dbReference>
<dbReference type="GO" id="GO:0070981">
    <property type="term" value="P:L-asparagine biosynthetic process"/>
    <property type="evidence" value="ECO:0007669"/>
    <property type="project" value="UniProtKB-UniRule"/>
</dbReference>
<dbReference type="CDD" id="cd00645">
    <property type="entry name" value="AsnA"/>
    <property type="match status" value="1"/>
</dbReference>
<dbReference type="Gene3D" id="3.30.930.10">
    <property type="entry name" value="Bira Bifunctional Protein, Domain 2"/>
    <property type="match status" value="1"/>
</dbReference>
<dbReference type="HAMAP" id="MF_00555">
    <property type="entry name" value="AsnA"/>
    <property type="match status" value="1"/>
</dbReference>
<dbReference type="InterPro" id="IPR006195">
    <property type="entry name" value="aa-tRNA-synth_II"/>
</dbReference>
<dbReference type="InterPro" id="IPR045864">
    <property type="entry name" value="aa-tRNA-synth_II/BPL/LPL"/>
</dbReference>
<dbReference type="InterPro" id="IPR004618">
    <property type="entry name" value="AsnA"/>
</dbReference>
<dbReference type="NCBIfam" id="TIGR00669">
    <property type="entry name" value="asnA"/>
    <property type="match status" value="1"/>
</dbReference>
<dbReference type="PANTHER" id="PTHR30073">
    <property type="entry name" value="ASPARTATE--AMMONIA LIGASE"/>
    <property type="match status" value="1"/>
</dbReference>
<dbReference type="PANTHER" id="PTHR30073:SF5">
    <property type="entry name" value="ASPARTATE--AMMONIA LIGASE"/>
    <property type="match status" value="1"/>
</dbReference>
<dbReference type="Pfam" id="PF03590">
    <property type="entry name" value="AsnA"/>
    <property type="match status" value="1"/>
</dbReference>
<dbReference type="PIRSF" id="PIRSF001555">
    <property type="entry name" value="Asp_ammon_ligase"/>
    <property type="match status" value="1"/>
</dbReference>
<dbReference type="SUPFAM" id="SSF55681">
    <property type="entry name" value="Class II aaRS and biotin synthetases"/>
    <property type="match status" value="1"/>
</dbReference>
<dbReference type="PROSITE" id="PS50862">
    <property type="entry name" value="AA_TRNA_LIGASE_II"/>
    <property type="match status" value="1"/>
</dbReference>
<organism>
    <name type="scientific">Bacillus thuringiensis subsp. konkukian (strain 97-27)</name>
    <dbReference type="NCBI Taxonomy" id="281309"/>
    <lineage>
        <taxon>Bacteria</taxon>
        <taxon>Bacillati</taxon>
        <taxon>Bacillota</taxon>
        <taxon>Bacilli</taxon>
        <taxon>Bacillales</taxon>
        <taxon>Bacillaceae</taxon>
        <taxon>Bacillus</taxon>
        <taxon>Bacillus cereus group</taxon>
    </lineage>
</organism>
<sequence>MYQSLMTVRETQIAIKEVKTFFEDQLAKRLELFRVSAPLFVTKKSGLNDHLNGVERPIEFDMLHSGEELEIVHSLAKWKRFALHEYGYEAGEGLYTNMNAIRRDEELDATHSIYVDQWDWEKIVQKEWRTVDYLQKTVLTIYGIFKDLEDHLFEKYPFLGKYLPEEIVFVTSQELEDKYPELTPKDREHAIAKEHGAVFIIGIGDALRSGEKHDGRAADYDDWKLNGDILFWHPVLQSSFELSSMGIRVDSKSLDEQLTKTGEDFKREYDFHKGILEDVLPLTIGGGIGQSRMCMYFLRKAHIGEVQSSVWPDDLREACKKENIHLF</sequence>
<feature type="chain" id="PRO_1000017938" description="Aspartate--ammonia ligase">
    <location>
        <begin position="1"/>
        <end position="327"/>
    </location>
</feature>
<accession>Q6HKD8</accession>
<keyword id="KW-0028">Amino-acid biosynthesis</keyword>
<keyword id="KW-0061">Asparagine biosynthesis</keyword>
<keyword id="KW-0067">ATP-binding</keyword>
<keyword id="KW-0963">Cytoplasm</keyword>
<keyword id="KW-0436">Ligase</keyword>
<keyword id="KW-0547">Nucleotide-binding</keyword>
<proteinExistence type="inferred from homology"/>
<gene>
    <name evidence="1" type="primary">asnA</name>
    <name type="ordered locus">BT9727_1655</name>
</gene>
<evidence type="ECO:0000255" key="1">
    <source>
        <dbReference type="HAMAP-Rule" id="MF_00555"/>
    </source>
</evidence>
<protein>
    <recommendedName>
        <fullName evidence="1">Aspartate--ammonia ligase</fullName>
        <ecNumber evidence="1">6.3.1.1</ecNumber>
    </recommendedName>
    <alternativeName>
        <fullName evidence="1">Asparagine synthetase A</fullName>
    </alternativeName>
</protein>
<name>ASNA_BACHK</name>
<comment type="catalytic activity">
    <reaction evidence="1">
        <text>L-aspartate + NH4(+) + ATP = L-asparagine + AMP + diphosphate + H(+)</text>
        <dbReference type="Rhea" id="RHEA:11372"/>
        <dbReference type="ChEBI" id="CHEBI:15378"/>
        <dbReference type="ChEBI" id="CHEBI:28938"/>
        <dbReference type="ChEBI" id="CHEBI:29991"/>
        <dbReference type="ChEBI" id="CHEBI:30616"/>
        <dbReference type="ChEBI" id="CHEBI:33019"/>
        <dbReference type="ChEBI" id="CHEBI:58048"/>
        <dbReference type="ChEBI" id="CHEBI:456215"/>
        <dbReference type="EC" id="6.3.1.1"/>
    </reaction>
</comment>
<comment type="pathway">
    <text evidence="1">Amino-acid biosynthesis; L-asparagine biosynthesis; L-asparagine from L-aspartate (ammonia route): step 1/1.</text>
</comment>
<comment type="subcellular location">
    <subcellularLocation>
        <location evidence="1">Cytoplasm</location>
    </subcellularLocation>
</comment>
<comment type="similarity">
    <text evidence="1">Belongs to the class-II aminoacyl-tRNA synthetase family. AsnA subfamily.</text>
</comment>